<keyword id="KW-1015">Disulfide bond</keyword>
<keyword id="KW-0325">Glycoprotein</keyword>
<keyword id="KW-0960">Knottin</keyword>
<keyword id="KW-0964">Secreted</keyword>
<keyword id="KW-0732">Signal</keyword>
<sequence length="150" mass="17161">MNTCIQLLILCLVTLTNSENLTDISTETTIENEKEDVTETELLETIENETETVTETELPETIGTEIPAEALNLPQSPKQKYCKSEGQYCSRTIFHRCCGNLVCQLHGFFNGTCVQCLAERKFCIWSSECCSKRCRLFRCRKNPYVQVIPY</sequence>
<name>SJ047_SCHJA</name>
<feature type="signal peptide" evidence="1">
    <location>
        <begin position="1"/>
        <end position="18"/>
    </location>
</feature>
<feature type="chain" id="PRO_0000311408" description="UPF0506 protein SJCHGC03047">
    <location>
        <begin position="19"/>
        <end position="150"/>
    </location>
</feature>
<feature type="glycosylation site" description="N-linked (GlcNAc...) asparagine" evidence="1">
    <location>
        <position position="20"/>
    </location>
</feature>
<feature type="glycosylation site" description="N-linked (GlcNAc...) asparagine" evidence="1">
    <location>
        <position position="48"/>
    </location>
</feature>
<feature type="glycosylation site" description="N-linked (GlcNAc...) asparagine" evidence="1">
    <location>
        <position position="110"/>
    </location>
</feature>
<feature type="disulfide bond" evidence="2">
    <location>
        <begin position="116"/>
        <end position="130"/>
    </location>
</feature>
<feature type="disulfide bond" evidence="2">
    <location>
        <begin position="123"/>
        <end position="134"/>
    </location>
</feature>
<feature type="disulfide bond" evidence="2">
    <location>
        <begin position="129"/>
        <end position="139"/>
    </location>
</feature>
<comment type="subcellular location">
    <subcellularLocation>
        <location evidence="2">Secreted</location>
    </subcellularLocation>
</comment>
<comment type="domain">
    <text evidence="2">The presence of a 'disulfide through disulfide knot' structurally defines this protein as a knottin.</text>
</comment>
<comment type="similarity">
    <text evidence="2">Belongs to the UPF0506 family.</text>
</comment>
<protein>
    <recommendedName>
        <fullName>UPF0506 protein SJCHGC03047</fullName>
    </recommendedName>
</protein>
<reference key="1">
    <citation type="journal article" date="2006" name="PLoS Pathog.">
        <title>New perspectives on host-parasite interplay by comparative transcriptomic and proteomic analyses of Schistosoma japonicum.</title>
        <authorList>
            <person name="Liu F."/>
            <person name="Lu J."/>
            <person name="Hu W."/>
            <person name="Wang S.-Y."/>
            <person name="Cui S.-J."/>
            <person name="Chi M."/>
            <person name="Yan Q."/>
            <person name="Wang X.-R."/>
            <person name="Song H.-D."/>
            <person name="Xu X.-N."/>
            <person name="Wang J.-J."/>
            <person name="Zhang X.-L."/>
            <person name="Zhang X."/>
            <person name="Wang Z.-Q."/>
            <person name="Xue C.-L."/>
            <person name="Brindley P.J."/>
            <person name="McManus D.P."/>
            <person name="Yang P.-Y."/>
            <person name="Feng Z."/>
            <person name="Chen Z."/>
            <person name="Han Z.-G."/>
        </authorList>
    </citation>
    <scope>NUCLEOTIDE SEQUENCE [LARGE SCALE MRNA]</scope>
</reference>
<dbReference type="EMBL" id="AY814850">
    <property type="protein sequence ID" value="AAW26582.1"/>
    <property type="molecule type" value="mRNA"/>
</dbReference>
<dbReference type="SMR" id="Q5DC74"/>
<dbReference type="OrthoDB" id="6236343at2759"/>
<dbReference type="GO" id="GO:0005576">
    <property type="term" value="C:extracellular region"/>
    <property type="evidence" value="ECO:0007669"/>
    <property type="project" value="UniProtKB-SubCell"/>
</dbReference>
<dbReference type="InterPro" id="IPR021712">
    <property type="entry name" value="UPF0506"/>
</dbReference>
<dbReference type="Pfam" id="PF11703">
    <property type="entry name" value="UPF0506"/>
    <property type="match status" value="1"/>
</dbReference>
<organism>
    <name type="scientific">Schistosoma japonicum</name>
    <name type="common">Blood fluke</name>
    <dbReference type="NCBI Taxonomy" id="6182"/>
    <lineage>
        <taxon>Eukaryota</taxon>
        <taxon>Metazoa</taxon>
        <taxon>Spiralia</taxon>
        <taxon>Lophotrochozoa</taxon>
        <taxon>Platyhelminthes</taxon>
        <taxon>Trematoda</taxon>
        <taxon>Digenea</taxon>
        <taxon>Strigeidida</taxon>
        <taxon>Schistosomatoidea</taxon>
        <taxon>Schistosomatidae</taxon>
        <taxon>Schistosoma</taxon>
    </lineage>
</organism>
<proteinExistence type="evidence at transcript level"/>
<gene>
    <name type="ORF">SJCHGC03047</name>
</gene>
<accession>Q5DC74</accession>
<evidence type="ECO:0000255" key="1"/>
<evidence type="ECO:0000305" key="2"/>